<name>HISX_CHRVO</name>
<sequence length="434" mass="46030">MLKLSSSQPDFAERLKALLAFETAQDPAVDAAVASICADVHHRGDAALVEHTNRFDRMQAAGMADLTLSREQLEAAWLRLPADVRDALSAAAERVRRYHEKQLAHSWSYEDEDGTLLGQQVTPLDRVGIYVPGGKAAYPSSVLMNALPAKVAGVGEIIMVVPTPGGERNDLVLAAAYIAGVDKVFTVGGAQAVAALAYGTETVPQVDKITGPGNAYVAAAKRRVFGVVGIDMVAGPSEILVICDGATDPDWVAMDLFSQAEHDEIAQAILLCPSADYIAQVEASIAKLLPSMPRRAIIEASLAGRGALIQVSDLAEACEISNYIAPEHLELSVADPDALLPQLRHAGAIFMGRFTSESLGDYCAGPNHVLPTSRTARFASPLGVYDFQKRSSLIRVSQAGAQKLGRIASLLAHGEGLTAHARAAELRLEDGTPR</sequence>
<accession>Q7P0F6</accession>
<organism>
    <name type="scientific">Chromobacterium violaceum (strain ATCC 12472 / DSM 30191 / JCM 1249 / CCUG 213 / NBRC 12614 / NCIMB 9131 / NCTC 9757 / MK)</name>
    <dbReference type="NCBI Taxonomy" id="243365"/>
    <lineage>
        <taxon>Bacteria</taxon>
        <taxon>Pseudomonadati</taxon>
        <taxon>Pseudomonadota</taxon>
        <taxon>Betaproteobacteria</taxon>
        <taxon>Neisseriales</taxon>
        <taxon>Chromobacteriaceae</taxon>
        <taxon>Chromobacterium</taxon>
    </lineage>
</organism>
<reference key="1">
    <citation type="journal article" date="2003" name="Proc. Natl. Acad. Sci. U.S.A.">
        <title>The complete genome sequence of Chromobacterium violaceum reveals remarkable and exploitable bacterial adaptability.</title>
        <authorList>
            <person name="Vasconcelos A.T.R."/>
            <person name="de Almeida D.F."/>
            <person name="Hungria M."/>
            <person name="Guimaraes C.T."/>
            <person name="Antonio R.V."/>
            <person name="Almeida F.C."/>
            <person name="de Almeida L.G.P."/>
            <person name="de Almeida R."/>
            <person name="Alves-Gomes J.A."/>
            <person name="Andrade E.M."/>
            <person name="Araripe J."/>
            <person name="de Araujo M.F.F."/>
            <person name="Astolfi-Filho S."/>
            <person name="Azevedo V."/>
            <person name="Baptista A.J."/>
            <person name="Bataus L.A.M."/>
            <person name="Batista J.S."/>
            <person name="Belo A."/>
            <person name="van den Berg C."/>
            <person name="Bogo M."/>
            <person name="Bonatto S."/>
            <person name="Bordignon J."/>
            <person name="Brigido M.M."/>
            <person name="Brito C.A."/>
            <person name="Brocchi M."/>
            <person name="Burity H.A."/>
            <person name="Camargo A.A."/>
            <person name="Cardoso D.D.P."/>
            <person name="Carneiro N.P."/>
            <person name="Carraro D.M."/>
            <person name="Carvalho C.M.B."/>
            <person name="Cascardo J.C.M."/>
            <person name="Cavada B.S."/>
            <person name="Chueire L.M.O."/>
            <person name="Creczynski-Pasa T.B."/>
            <person name="Cunha-Junior N.C."/>
            <person name="Fagundes N."/>
            <person name="Falcao C.L."/>
            <person name="Fantinatti F."/>
            <person name="Farias I.P."/>
            <person name="Felipe M.S.S."/>
            <person name="Ferrari L.P."/>
            <person name="Ferro J.A."/>
            <person name="Ferro M.I.T."/>
            <person name="Franco G.R."/>
            <person name="Freitas N.S.A."/>
            <person name="Furlan L.R."/>
            <person name="Gazzinelli R.T."/>
            <person name="Gomes E.A."/>
            <person name="Goncalves P.R."/>
            <person name="Grangeiro T.B."/>
            <person name="Grattapaglia D."/>
            <person name="Grisard E.C."/>
            <person name="Hanna E.S."/>
            <person name="Jardim S.N."/>
            <person name="Laurino J."/>
            <person name="Leoi L.C.T."/>
            <person name="Lima L.F.A."/>
            <person name="Loureiro M.F."/>
            <person name="Lyra M.C.C.P."/>
            <person name="Madeira H.M.F."/>
            <person name="Manfio G.P."/>
            <person name="Maranhao A.Q."/>
            <person name="Martins W.S."/>
            <person name="di Mauro S.M.Z."/>
            <person name="de Medeiros S.R.B."/>
            <person name="Meissner R.V."/>
            <person name="Moreira M.A.M."/>
            <person name="Nascimento F.F."/>
            <person name="Nicolas M.F."/>
            <person name="Oliveira J.G."/>
            <person name="Oliveira S.C."/>
            <person name="Paixao R.F.C."/>
            <person name="Parente J.A."/>
            <person name="Pedrosa F.O."/>
            <person name="Pena S.D.J."/>
            <person name="Pereira J.O."/>
            <person name="Pereira M."/>
            <person name="Pinto L.S.R.C."/>
            <person name="Pinto L.S."/>
            <person name="Porto J.I.R."/>
            <person name="Potrich D.P."/>
            <person name="Ramalho-Neto C.E."/>
            <person name="Reis A.M.M."/>
            <person name="Rigo L.U."/>
            <person name="Rondinelli E."/>
            <person name="Santos E.B.P."/>
            <person name="Santos F.R."/>
            <person name="Schneider M.P.C."/>
            <person name="Seuanez H.N."/>
            <person name="Silva A.M.R."/>
            <person name="da Silva A.L.C."/>
            <person name="Silva D.W."/>
            <person name="Silva R."/>
            <person name="Simoes I.C."/>
            <person name="Simon D."/>
            <person name="Soares C.M.A."/>
            <person name="Soares R.B.A."/>
            <person name="Souza E.M."/>
            <person name="Souza K.R.L."/>
            <person name="Souza R.C."/>
            <person name="Steffens M.B.R."/>
            <person name="Steindel M."/>
            <person name="Teixeira S.R."/>
            <person name="Urmenyi T."/>
            <person name="Vettore A."/>
            <person name="Wassem R."/>
            <person name="Zaha A."/>
            <person name="Simpson A.J.G."/>
        </authorList>
    </citation>
    <scope>NUCLEOTIDE SEQUENCE [LARGE SCALE GENOMIC DNA]</scope>
    <source>
        <strain>ATCC 12472 / DSM 30191 / JCM 1249 / CCUG 213 / NBRC 12614 / NCIMB 9131 / NCTC 9757 / MK</strain>
    </source>
</reference>
<proteinExistence type="inferred from homology"/>
<evidence type="ECO:0000255" key="1">
    <source>
        <dbReference type="HAMAP-Rule" id="MF_01024"/>
    </source>
</evidence>
<gene>
    <name evidence="1" type="primary">hisD</name>
    <name type="ordered locus">CV_0611</name>
</gene>
<dbReference type="EC" id="1.1.1.23" evidence="1"/>
<dbReference type="EMBL" id="AE016825">
    <property type="protein sequence ID" value="AAQ58287.1"/>
    <property type="molecule type" value="Genomic_DNA"/>
</dbReference>
<dbReference type="RefSeq" id="WP_011134166.1">
    <property type="nucleotide sequence ID" value="NC_005085.1"/>
</dbReference>
<dbReference type="SMR" id="Q7P0F6"/>
<dbReference type="STRING" id="243365.CV_0611"/>
<dbReference type="KEGG" id="cvi:CV_0611"/>
<dbReference type="eggNOG" id="COG0141">
    <property type="taxonomic scope" value="Bacteria"/>
</dbReference>
<dbReference type="HOGENOM" id="CLU_006732_3_3_4"/>
<dbReference type="OrthoDB" id="9805269at2"/>
<dbReference type="UniPathway" id="UPA00031">
    <property type="reaction ID" value="UER00014"/>
</dbReference>
<dbReference type="Proteomes" id="UP000001424">
    <property type="component" value="Chromosome"/>
</dbReference>
<dbReference type="GO" id="GO:0005829">
    <property type="term" value="C:cytosol"/>
    <property type="evidence" value="ECO:0007669"/>
    <property type="project" value="TreeGrafter"/>
</dbReference>
<dbReference type="GO" id="GO:0004399">
    <property type="term" value="F:histidinol dehydrogenase activity"/>
    <property type="evidence" value="ECO:0007669"/>
    <property type="project" value="UniProtKB-UniRule"/>
</dbReference>
<dbReference type="GO" id="GO:0051287">
    <property type="term" value="F:NAD binding"/>
    <property type="evidence" value="ECO:0007669"/>
    <property type="project" value="InterPro"/>
</dbReference>
<dbReference type="GO" id="GO:0008270">
    <property type="term" value="F:zinc ion binding"/>
    <property type="evidence" value="ECO:0007669"/>
    <property type="project" value="UniProtKB-UniRule"/>
</dbReference>
<dbReference type="GO" id="GO:0000105">
    <property type="term" value="P:L-histidine biosynthetic process"/>
    <property type="evidence" value="ECO:0007669"/>
    <property type="project" value="UniProtKB-UniRule"/>
</dbReference>
<dbReference type="CDD" id="cd06572">
    <property type="entry name" value="Histidinol_dh"/>
    <property type="match status" value="1"/>
</dbReference>
<dbReference type="FunFam" id="3.40.50.1980:FF:000004">
    <property type="entry name" value="Histidinol dehydrogenase"/>
    <property type="match status" value="1"/>
</dbReference>
<dbReference type="FunFam" id="3.40.50.1980:FF:000010">
    <property type="entry name" value="Histidinol dehydrogenase"/>
    <property type="match status" value="1"/>
</dbReference>
<dbReference type="FunFam" id="1.20.5.1300:FF:000002">
    <property type="entry name" value="Histidinol dehydrogenase, chloroplastic"/>
    <property type="match status" value="1"/>
</dbReference>
<dbReference type="Gene3D" id="1.20.5.1300">
    <property type="match status" value="1"/>
</dbReference>
<dbReference type="Gene3D" id="3.40.50.1980">
    <property type="entry name" value="Nitrogenase molybdenum iron protein domain"/>
    <property type="match status" value="2"/>
</dbReference>
<dbReference type="HAMAP" id="MF_01024">
    <property type="entry name" value="HisD"/>
    <property type="match status" value="1"/>
</dbReference>
<dbReference type="InterPro" id="IPR016161">
    <property type="entry name" value="Ald_DH/histidinol_DH"/>
</dbReference>
<dbReference type="InterPro" id="IPR001692">
    <property type="entry name" value="Histidinol_DH_CS"/>
</dbReference>
<dbReference type="InterPro" id="IPR022695">
    <property type="entry name" value="Histidinol_DH_monofunct"/>
</dbReference>
<dbReference type="InterPro" id="IPR012131">
    <property type="entry name" value="Hstdl_DH"/>
</dbReference>
<dbReference type="NCBIfam" id="TIGR00069">
    <property type="entry name" value="hisD"/>
    <property type="match status" value="1"/>
</dbReference>
<dbReference type="PANTHER" id="PTHR21256:SF2">
    <property type="entry name" value="HISTIDINE BIOSYNTHESIS TRIFUNCTIONAL PROTEIN"/>
    <property type="match status" value="1"/>
</dbReference>
<dbReference type="PANTHER" id="PTHR21256">
    <property type="entry name" value="HISTIDINOL DEHYDROGENASE HDH"/>
    <property type="match status" value="1"/>
</dbReference>
<dbReference type="Pfam" id="PF00815">
    <property type="entry name" value="Histidinol_dh"/>
    <property type="match status" value="1"/>
</dbReference>
<dbReference type="PIRSF" id="PIRSF000099">
    <property type="entry name" value="Histidinol_dh"/>
    <property type="match status" value="1"/>
</dbReference>
<dbReference type="PRINTS" id="PR00083">
    <property type="entry name" value="HOLDHDRGNASE"/>
</dbReference>
<dbReference type="SUPFAM" id="SSF53720">
    <property type="entry name" value="ALDH-like"/>
    <property type="match status" value="1"/>
</dbReference>
<dbReference type="PROSITE" id="PS00611">
    <property type="entry name" value="HISOL_DEHYDROGENASE"/>
    <property type="match status" value="1"/>
</dbReference>
<comment type="function">
    <text evidence="1">Catalyzes the sequential NAD-dependent oxidations of L-histidinol to L-histidinaldehyde and then to L-histidine.</text>
</comment>
<comment type="catalytic activity">
    <reaction evidence="1">
        <text>L-histidinol + 2 NAD(+) + H2O = L-histidine + 2 NADH + 3 H(+)</text>
        <dbReference type="Rhea" id="RHEA:20641"/>
        <dbReference type="ChEBI" id="CHEBI:15377"/>
        <dbReference type="ChEBI" id="CHEBI:15378"/>
        <dbReference type="ChEBI" id="CHEBI:57540"/>
        <dbReference type="ChEBI" id="CHEBI:57595"/>
        <dbReference type="ChEBI" id="CHEBI:57699"/>
        <dbReference type="ChEBI" id="CHEBI:57945"/>
        <dbReference type="EC" id="1.1.1.23"/>
    </reaction>
</comment>
<comment type="cofactor">
    <cofactor evidence="1">
        <name>Zn(2+)</name>
        <dbReference type="ChEBI" id="CHEBI:29105"/>
    </cofactor>
    <text evidence="1">Binds 1 zinc ion per subunit.</text>
</comment>
<comment type="pathway">
    <text evidence="1">Amino-acid biosynthesis; L-histidine biosynthesis; L-histidine from 5-phospho-alpha-D-ribose 1-diphosphate: step 9/9.</text>
</comment>
<comment type="similarity">
    <text evidence="1">Belongs to the histidinol dehydrogenase family.</text>
</comment>
<feature type="chain" id="PRO_0000135755" description="Histidinol dehydrogenase">
    <location>
        <begin position="1"/>
        <end position="434"/>
    </location>
</feature>
<feature type="active site" description="Proton acceptor" evidence="1">
    <location>
        <position position="327"/>
    </location>
</feature>
<feature type="active site" description="Proton acceptor" evidence="1">
    <location>
        <position position="328"/>
    </location>
</feature>
<feature type="binding site" evidence="1">
    <location>
        <position position="130"/>
    </location>
    <ligand>
        <name>NAD(+)</name>
        <dbReference type="ChEBI" id="CHEBI:57540"/>
    </ligand>
</feature>
<feature type="binding site" evidence="1">
    <location>
        <position position="191"/>
    </location>
    <ligand>
        <name>NAD(+)</name>
        <dbReference type="ChEBI" id="CHEBI:57540"/>
    </ligand>
</feature>
<feature type="binding site" evidence="1">
    <location>
        <position position="214"/>
    </location>
    <ligand>
        <name>NAD(+)</name>
        <dbReference type="ChEBI" id="CHEBI:57540"/>
    </ligand>
</feature>
<feature type="binding site" evidence="1">
    <location>
        <position position="237"/>
    </location>
    <ligand>
        <name>substrate</name>
    </ligand>
</feature>
<feature type="binding site" evidence="1">
    <location>
        <position position="259"/>
    </location>
    <ligand>
        <name>substrate</name>
    </ligand>
</feature>
<feature type="binding site" evidence="1">
    <location>
        <position position="259"/>
    </location>
    <ligand>
        <name>Zn(2+)</name>
        <dbReference type="ChEBI" id="CHEBI:29105"/>
    </ligand>
</feature>
<feature type="binding site" evidence="1">
    <location>
        <position position="262"/>
    </location>
    <ligand>
        <name>substrate</name>
    </ligand>
</feature>
<feature type="binding site" evidence="1">
    <location>
        <position position="262"/>
    </location>
    <ligand>
        <name>Zn(2+)</name>
        <dbReference type="ChEBI" id="CHEBI:29105"/>
    </ligand>
</feature>
<feature type="binding site" evidence="1">
    <location>
        <position position="328"/>
    </location>
    <ligand>
        <name>substrate</name>
    </ligand>
</feature>
<feature type="binding site" evidence="1">
    <location>
        <position position="361"/>
    </location>
    <ligand>
        <name>substrate</name>
    </ligand>
</feature>
<feature type="binding site" evidence="1">
    <location>
        <position position="361"/>
    </location>
    <ligand>
        <name>Zn(2+)</name>
        <dbReference type="ChEBI" id="CHEBI:29105"/>
    </ligand>
</feature>
<feature type="binding site" evidence="1">
    <location>
        <position position="415"/>
    </location>
    <ligand>
        <name>substrate</name>
    </ligand>
</feature>
<feature type="binding site" evidence="1">
    <location>
        <position position="420"/>
    </location>
    <ligand>
        <name>substrate</name>
    </ligand>
</feature>
<feature type="binding site" evidence="1">
    <location>
        <position position="420"/>
    </location>
    <ligand>
        <name>Zn(2+)</name>
        <dbReference type="ChEBI" id="CHEBI:29105"/>
    </ligand>
</feature>
<protein>
    <recommendedName>
        <fullName evidence="1">Histidinol dehydrogenase</fullName>
        <shortName evidence="1">HDH</shortName>
        <ecNumber evidence="1">1.1.1.23</ecNumber>
    </recommendedName>
</protein>
<keyword id="KW-0028">Amino-acid biosynthesis</keyword>
<keyword id="KW-0368">Histidine biosynthesis</keyword>
<keyword id="KW-0479">Metal-binding</keyword>
<keyword id="KW-0520">NAD</keyword>
<keyword id="KW-0560">Oxidoreductase</keyword>
<keyword id="KW-1185">Reference proteome</keyword>
<keyword id="KW-0862">Zinc</keyword>